<dbReference type="EMBL" id="CP001150">
    <property type="protein sequence ID" value="ACL99879.1"/>
    <property type="molecule type" value="Genomic_DNA"/>
</dbReference>
<dbReference type="RefSeq" id="WP_002722498.1">
    <property type="nucleotide sequence ID" value="NC_011963.1"/>
</dbReference>
<dbReference type="SMR" id="B9KL97"/>
<dbReference type="GeneID" id="67445506"/>
<dbReference type="KEGG" id="rsk:RSKD131_0020"/>
<dbReference type="HOGENOM" id="CLU_058591_0_2_5"/>
<dbReference type="GO" id="GO:0022627">
    <property type="term" value="C:cytosolic small ribosomal subunit"/>
    <property type="evidence" value="ECO:0007669"/>
    <property type="project" value="TreeGrafter"/>
</dbReference>
<dbReference type="GO" id="GO:0003729">
    <property type="term" value="F:mRNA binding"/>
    <property type="evidence" value="ECO:0007669"/>
    <property type="project" value="UniProtKB-UniRule"/>
</dbReference>
<dbReference type="GO" id="GO:0019843">
    <property type="term" value="F:rRNA binding"/>
    <property type="evidence" value="ECO:0007669"/>
    <property type="project" value="UniProtKB-UniRule"/>
</dbReference>
<dbReference type="GO" id="GO:0003735">
    <property type="term" value="F:structural constituent of ribosome"/>
    <property type="evidence" value="ECO:0007669"/>
    <property type="project" value="InterPro"/>
</dbReference>
<dbReference type="GO" id="GO:0006412">
    <property type="term" value="P:translation"/>
    <property type="evidence" value="ECO:0007669"/>
    <property type="project" value="UniProtKB-UniRule"/>
</dbReference>
<dbReference type="CDD" id="cd02412">
    <property type="entry name" value="KH-II_30S_S3"/>
    <property type="match status" value="1"/>
</dbReference>
<dbReference type="FunFam" id="3.30.1140.32:FF:000001">
    <property type="entry name" value="30S ribosomal protein S3"/>
    <property type="match status" value="1"/>
</dbReference>
<dbReference type="FunFam" id="3.30.300.20:FF:000001">
    <property type="entry name" value="30S ribosomal protein S3"/>
    <property type="match status" value="1"/>
</dbReference>
<dbReference type="Gene3D" id="3.30.300.20">
    <property type="match status" value="1"/>
</dbReference>
<dbReference type="Gene3D" id="3.30.1140.32">
    <property type="entry name" value="Ribosomal protein S3, C-terminal domain"/>
    <property type="match status" value="1"/>
</dbReference>
<dbReference type="HAMAP" id="MF_01309_B">
    <property type="entry name" value="Ribosomal_uS3_B"/>
    <property type="match status" value="1"/>
</dbReference>
<dbReference type="InterPro" id="IPR004087">
    <property type="entry name" value="KH_dom"/>
</dbReference>
<dbReference type="InterPro" id="IPR015946">
    <property type="entry name" value="KH_dom-like_a/b"/>
</dbReference>
<dbReference type="InterPro" id="IPR004044">
    <property type="entry name" value="KH_dom_type_2"/>
</dbReference>
<dbReference type="InterPro" id="IPR009019">
    <property type="entry name" value="KH_sf_prok-type"/>
</dbReference>
<dbReference type="InterPro" id="IPR036419">
    <property type="entry name" value="Ribosomal_S3_C_sf"/>
</dbReference>
<dbReference type="InterPro" id="IPR005704">
    <property type="entry name" value="Ribosomal_uS3_bac-typ"/>
</dbReference>
<dbReference type="InterPro" id="IPR001351">
    <property type="entry name" value="Ribosomal_uS3_C"/>
</dbReference>
<dbReference type="InterPro" id="IPR018280">
    <property type="entry name" value="Ribosomal_uS3_CS"/>
</dbReference>
<dbReference type="NCBIfam" id="TIGR01009">
    <property type="entry name" value="rpsC_bact"/>
    <property type="match status" value="1"/>
</dbReference>
<dbReference type="PANTHER" id="PTHR11760">
    <property type="entry name" value="30S/40S RIBOSOMAL PROTEIN S3"/>
    <property type="match status" value="1"/>
</dbReference>
<dbReference type="PANTHER" id="PTHR11760:SF19">
    <property type="entry name" value="SMALL RIBOSOMAL SUBUNIT PROTEIN US3C"/>
    <property type="match status" value="1"/>
</dbReference>
<dbReference type="Pfam" id="PF07650">
    <property type="entry name" value="KH_2"/>
    <property type="match status" value="1"/>
</dbReference>
<dbReference type="Pfam" id="PF00189">
    <property type="entry name" value="Ribosomal_S3_C"/>
    <property type="match status" value="1"/>
</dbReference>
<dbReference type="SMART" id="SM00322">
    <property type="entry name" value="KH"/>
    <property type="match status" value="1"/>
</dbReference>
<dbReference type="SUPFAM" id="SSF54814">
    <property type="entry name" value="Prokaryotic type KH domain (KH-domain type II)"/>
    <property type="match status" value="1"/>
</dbReference>
<dbReference type="SUPFAM" id="SSF54821">
    <property type="entry name" value="Ribosomal protein S3 C-terminal domain"/>
    <property type="match status" value="1"/>
</dbReference>
<dbReference type="PROSITE" id="PS50823">
    <property type="entry name" value="KH_TYPE_2"/>
    <property type="match status" value="1"/>
</dbReference>
<dbReference type="PROSITE" id="PS00548">
    <property type="entry name" value="RIBOSOMAL_S3"/>
    <property type="match status" value="1"/>
</dbReference>
<reference key="1">
    <citation type="journal article" date="2009" name="J. Bacteriol.">
        <title>Complete genome sequence of Rhodobacter sphaeroides KD131.</title>
        <authorList>
            <person name="Lim S.-K."/>
            <person name="Kim S.J."/>
            <person name="Cha S.H."/>
            <person name="Oh Y.-K."/>
            <person name="Rhee H.-J."/>
            <person name="Kim M.-S."/>
            <person name="Lee J.K."/>
        </authorList>
    </citation>
    <scope>NUCLEOTIDE SEQUENCE [LARGE SCALE GENOMIC DNA]</scope>
    <source>
        <strain>KD131 / KCTC 12085</strain>
    </source>
</reference>
<accession>B9KL97</accession>
<gene>
    <name evidence="1" type="primary">rpsC</name>
    <name type="ordered locus">RSKD131_0020</name>
</gene>
<comment type="function">
    <text evidence="1">Binds the lower part of the 30S subunit head. Binds mRNA in the 70S ribosome, positioning it for translation.</text>
</comment>
<comment type="subunit">
    <text evidence="1">Part of the 30S ribosomal subunit. Forms a tight complex with proteins S10 and S14.</text>
</comment>
<comment type="similarity">
    <text evidence="1">Belongs to the universal ribosomal protein uS3 family.</text>
</comment>
<organism>
    <name type="scientific">Cereibacter sphaeroides (strain KD131 / KCTC 12085)</name>
    <name type="common">Rhodobacter sphaeroides</name>
    <dbReference type="NCBI Taxonomy" id="557760"/>
    <lineage>
        <taxon>Bacteria</taxon>
        <taxon>Pseudomonadati</taxon>
        <taxon>Pseudomonadota</taxon>
        <taxon>Alphaproteobacteria</taxon>
        <taxon>Rhodobacterales</taxon>
        <taxon>Paracoccaceae</taxon>
        <taxon>Cereibacter</taxon>
    </lineage>
</organism>
<proteinExistence type="inferred from homology"/>
<evidence type="ECO:0000255" key="1">
    <source>
        <dbReference type="HAMAP-Rule" id="MF_01309"/>
    </source>
</evidence>
<evidence type="ECO:0000256" key="2">
    <source>
        <dbReference type="SAM" id="MobiDB-lite"/>
    </source>
</evidence>
<evidence type="ECO:0000305" key="3"/>
<feature type="chain" id="PRO_1000165508" description="Small ribosomal subunit protein uS3">
    <location>
        <begin position="1"/>
        <end position="238"/>
    </location>
</feature>
<feature type="domain" description="KH type-2" evidence="1">
    <location>
        <begin position="39"/>
        <end position="107"/>
    </location>
</feature>
<feature type="region of interest" description="Disordered" evidence="2">
    <location>
        <begin position="212"/>
        <end position="238"/>
    </location>
</feature>
<feature type="compositionally biased region" description="Basic and acidic residues" evidence="2">
    <location>
        <begin position="212"/>
        <end position="222"/>
    </location>
</feature>
<name>RS3_CERSK</name>
<keyword id="KW-0687">Ribonucleoprotein</keyword>
<keyword id="KW-0689">Ribosomal protein</keyword>
<keyword id="KW-0694">RNA-binding</keyword>
<keyword id="KW-0699">rRNA-binding</keyword>
<protein>
    <recommendedName>
        <fullName evidence="1">Small ribosomal subunit protein uS3</fullName>
    </recommendedName>
    <alternativeName>
        <fullName evidence="3">30S ribosomal protein S3</fullName>
    </alternativeName>
</protein>
<sequence>MGQKVNPIGMRLQVNRTWDSRWFAESKDYGNLLLEDLKMREFIHDYAKQAGVSKVIIERPHRKCRVTIHTARPGVIIGKKGADIETLRKKLSAFTKSELHLNIVEIRKPELDAQLVAESIAQQMERRVSFRRAMKRGVQNAMRIGALGIRVNVSGRLGGAEIARTEWYREGRVPLHTLRADIDYATSEATTPYGIIGVKVWIFKGEILEHDPQAHDRRHSEAQEGAAPRPPRRDRERA</sequence>